<comment type="function">
    <text>Involved in maceration and soft-rotting of plant tissue.</text>
</comment>
<comment type="catalytic activity">
    <reaction>
        <text>Eliminative cleavage of (1-&gt;4)-alpha-D-galacturonan to give oligosaccharides with 4-deoxy-alpha-D-galact-4-enuronosyl groups at their non-reducing ends.</text>
        <dbReference type="EC" id="4.2.2.2"/>
    </reaction>
</comment>
<comment type="cofactor">
    <cofactor>
        <name>Ca(2+)</name>
        <dbReference type="ChEBI" id="CHEBI:29108"/>
    </cofactor>
    <text>Binds 1 Ca(2+) ion per subunit.</text>
</comment>
<comment type="pathway">
    <text>Glycan metabolism; pectin degradation; 2-dehydro-3-deoxy-D-gluconate from pectin: step 2/5.</text>
</comment>
<comment type="subcellular location">
    <subcellularLocation>
        <location>Secreted</location>
    </subcellularLocation>
</comment>
<comment type="miscellaneous">
    <text>Pectate lyases have been implicated as pathogenicity factors which induce maceration or rotting of plant tissue. PelE is sufficient to induce these effects under laboratory conditions.</text>
</comment>
<comment type="similarity">
    <text evidence="3">Belongs to the polysaccharide lyase 1 family. PLBC subfamily.</text>
</comment>
<protein>
    <recommendedName>
        <fullName>Pectate lyase E</fullName>
        <ecNumber>4.2.2.2</ecNumber>
    </recommendedName>
</protein>
<reference key="1">
    <citation type="journal article" date="1986" name="J. Bacteriol.">
        <title>Structure of two pectate lyase genes from Erwinia chrysanthemi EC16 and their high-level expression in Escherichia coli.</title>
        <authorList>
            <person name="Keen N.T."/>
            <person name="Tamaki S."/>
        </authorList>
    </citation>
    <scope>NUCLEOTIDE SEQUENCE [GENOMIC DNA]</scope>
    <source>
        <strain>EC16</strain>
    </source>
</reference>
<reference key="2">
    <citation type="journal article" date="1993" name="Structure">
        <title>Unusual structural features in the parallel beta-helix in pectate lyases.</title>
        <authorList>
            <person name="Yoder M.D."/>
            <person name="Lietzke S.E."/>
            <person name="Jurnak F."/>
        </authorList>
    </citation>
    <scope>X-RAY CRYSTALLOGRAPHY (2.2 ANGSTROMS)</scope>
</reference>
<reference key="3">
    <citation type="journal article" date="1994" name="Plant Physiol.">
        <title>The three-dimensional structure of pectate lyase E, a plant virulence factor from Erwinia chrysanthemi.</title>
        <authorList>
            <person name="Lietzke S.E."/>
            <person name="Yoder M.D."/>
            <person name="Keen N.T."/>
            <person name="Jurnak F.A."/>
        </authorList>
    </citation>
    <scope>X-RAY CRYSTALLOGRAPHY (2.2 ANGSTROMS)</scope>
</reference>
<reference key="4">
    <citation type="journal article" date="1996" name="Plant Physiol.">
        <title>The refined three-dimensional structure of pectate lyase E from Erwinia chrysanthemi at 2.2-A resolution.</title>
        <authorList>
            <person name="Lietzke S.E."/>
            <person name="Scavetta R.D."/>
            <person name="Yoder M.D."/>
            <person name="Jurnak F.A."/>
        </authorList>
    </citation>
    <scope>X-RAY CRYSTALLOGRAPHY (2.2 ANGSTROMS)</scope>
</reference>
<keyword id="KW-0002">3D-structure</keyword>
<keyword id="KW-0106">Calcium</keyword>
<keyword id="KW-0456">Lyase</keyword>
<keyword id="KW-0479">Metal-binding</keyword>
<keyword id="KW-0677">Repeat</keyword>
<keyword id="KW-0964">Secreted</keyword>
<keyword id="KW-0732">Signal</keyword>
<gene>
    <name type="primary">pelE</name>
</gene>
<accession>P04960</accession>
<dbReference type="EC" id="4.2.2.2"/>
<dbReference type="EMBL" id="M14509">
    <property type="protein sequence ID" value="AAA24844.1"/>
    <property type="molecule type" value="Genomic_DNA"/>
</dbReference>
<dbReference type="PIR" id="A25158">
    <property type="entry name" value="WZWC6E"/>
</dbReference>
<dbReference type="PDB" id="1PCL">
    <property type="method" value="X-ray"/>
    <property type="resolution" value="2.20 A"/>
    <property type="chains" value="A=31-385"/>
</dbReference>
<dbReference type="PDBsum" id="1PCL"/>
<dbReference type="SMR" id="P04960"/>
<dbReference type="CAZy" id="PL1">
    <property type="family name" value="Polysaccharide Lyase Family 1"/>
</dbReference>
<dbReference type="UniPathway" id="UPA00545">
    <property type="reaction ID" value="UER00824"/>
</dbReference>
<dbReference type="EvolutionaryTrace" id="P04960"/>
<dbReference type="GO" id="GO:0005576">
    <property type="term" value="C:extracellular region"/>
    <property type="evidence" value="ECO:0007669"/>
    <property type="project" value="UniProtKB-SubCell"/>
</dbReference>
<dbReference type="GO" id="GO:0046872">
    <property type="term" value="F:metal ion binding"/>
    <property type="evidence" value="ECO:0007669"/>
    <property type="project" value="UniProtKB-KW"/>
</dbReference>
<dbReference type="GO" id="GO:0030570">
    <property type="term" value="F:pectate lyase activity"/>
    <property type="evidence" value="ECO:0007669"/>
    <property type="project" value="UniProtKB-EC"/>
</dbReference>
<dbReference type="GO" id="GO:0045490">
    <property type="term" value="P:pectin catabolic process"/>
    <property type="evidence" value="ECO:0007669"/>
    <property type="project" value="UniProtKB-UniPathway"/>
</dbReference>
<dbReference type="Gene3D" id="2.160.20.10">
    <property type="entry name" value="Single-stranded right-handed beta-helix, Pectin lyase-like"/>
    <property type="match status" value="1"/>
</dbReference>
<dbReference type="InterPro" id="IPR002022">
    <property type="entry name" value="Pec_lyase"/>
</dbReference>
<dbReference type="InterPro" id="IPR012334">
    <property type="entry name" value="Pectin_lyas_fold"/>
</dbReference>
<dbReference type="InterPro" id="IPR011050">
    <property type="entry name" value="Pectin_lyase_fold/virulence"/>
</dbReference>
<dbReference type="InterPro" id="IPR045032">
    <property type="entry name" value="PEL"/>
</dbReference>
<dbReference type="PANTHER" id="PTHR31683">
    <property type="entry name" value="PECTATE LYASE 18-RELATED"/>
    <property type="match status" value="1"/>
</dbReference>
<dbReference type="PANTHER" id="PTHR31683:SF18">
    <property type="entry name" value="PECTATE LYASE 21-RELATED"/>
    <property type="match status" value="1"/>
</dbReference>
<dbReference type="Pfam" id="PF00544">
    <property type="entry name" value="Pectate_lyase_4"/>
    <property type="match status" value="1"/>
</dbReference>
<dbReference type="SMART" id="SM00656">
    <property type="entry name" value="Amb_all"/>
    <property type="match status" value="1"/>
</dbReference>
<dbReference type="SUPFAM" id="SSF51126">
    <property type="entry name" value="Pectin lyase-like"/>
    <property type="match status" value="1"/>
</dbReference>
<proteinExistence type="evidence at protein level"/>
<name>PLYE1_DICCH</name>
<organism>
    <name type="scientific">Dickeya chrysanthemi</name>
    <name type="common">Pectobacterium chrysanthemi</name>
    <name type="synonym">Erwinia chrysanthemi</name>
    <dbReference type="NCBI Taxonomy" id="556"/>
    <lineage>
        <taxon>Bacteria</taxon>
        <taxon>Pseudomonadati</taxon>
        <taxon>Pseudomonadota</taxon>
        <taxon>Gammaproteobacteria</taxon>
        <taxon>Enterobacterales</taxon>
        <taxon>Pectobacteriaceae</taxon>
        <taxon>Dickeya</taxon>
    </lineage>
</organism>
<sequence length="385" mass="41250">MKNTRVRSIGTKSLLAAVVTAALMATSAYAAVETDAATTGWATQNGGTTGGAKAAKAVEVKNISDFKKALNGTDSSAKIIKVTGPIDISGGKAYTSFDDQKARSQISIPSNTTIIGVGSNGKFTNGSLVIKGVKNVILRNLYIETPVDVAPHYESGDGWNAEWDAAVIDNSTNVWVDHVTISDGSFTDDKYTTKDGEKYVQHDGALDIKKGSDYVTISYSRFELHDKTILIGHSDSNGSQDSGKLRVTFHNNVFDRVTERAPRVRFGSIHAYNNVYLGDVKHSVYPYLYSFGLGTSGSILSESNSFTLSNLKSIDGKNPECSIVKQFNSKVFSDKGSLVNGSTTTKLDTCGLTAYKPTLPYKYSAQTMTSSLATSINNNAGYGKL</sequence>
<evidence type="ECO:0000250" key="1"/>
<evidence type="ECO:0000255" key="2"/>
<evidence type="ECO:0000305" key="3"/>
<feature type="signal peptide">
    <location>
        <begin position="1"/>
        <end position="30"/>
    </location>
</feature>
<feature type="chain" id="PRO_0000024857" description="Pectate lyase E">
    <location>
        <begin position="31"/>
        <end position="385"/>
    </location>
</feature>
<feature type="repeat" description="1">
    <location>
        <begin position="177"/>
        <end position="182"/>
    </location>
</feature>
<feature type="repeat" description="2">
    <location>
        <begin position="213"/>
        <end position="218"/>
    </location>
</feature>
<feature type="region of interest" description="2 X 6 AA approximate repeats">
    <location>
        <begin position="177"/>
        <end position="218"/>
    </location>
</feature>
<feature type="active site" evidence="2">
    <location>
        <position position="260"/>
    </location>
</feature>
<feature type="binding site" evidence="1">
    <location>
        <position position="164"/>
    </location>
    <ligand>
        <name>Ca(2+)</name>
        <dbReference type="ChEBI" id="CHEBI:29108"/>
    </ligand>
</feature>
<feature type="binding site" evidence="1">
    <location>
        <position position="207"/>
    </location>
    <ligand>
        <name>Ca(2+)</name>
        <dbReference type="ChEBI" id="CHEBI:29108"/>
    </ligand>
</feature>